<reference key="1">
    <citation type="journal article" date="2002" name="Proc. Natl. Acad. Sci. U.S.A.">
        <title>The genome sequence of the facultative intracellular pathogen Brucella melitensis.</title>
        <authorList>
            <person name="DelVecchio V.G."/>
            <person name="Kapatral V."/>
            <person name="Redkar R.J."/>
            <person name="Patra G."/>
            <person name="Mujer C."/>
            <person name="Los T."/>
            <person name="Ivanova N."/>
            <person name="Anderson I."/>
            <person name="Bhattacharyya A."/>
            <person name="Lykidis A."/>
            <person name="Reznik G."/>
            <person name="Jablonski L."/>
            <person name="Larsen N."/>
            <person name="D'Souza M."/>
            <person name="Bernal A."/>
            <person name="Mazur M."/>
            <person name="Goltsman E."/>
            <person name="Selkov E."/>
            <person name="Elzer P.H."/>
            <person name="Hagius S."/>
            <person name="O'Callaghan D."/>
            <person name="Letesson J.-J."/>
            <person name="Haselkorn R."/>
            <person name="Kyrpides N.C."/>
            <person name="Overbeek R."/>
        </authorList>
    </citation>
    <scope>NUCLEOTIDE SEQUENCE [LARGE SCALE GENOMIC DNA]</scope>
    <source>
        <strain>ATCC 23456 / CCUG 17765 / NCTC 10094 / 16M</strain>
    </source>
</reference>
<evidence type="ECO:0000255" key="1"/>
<evidence type="ECO:0000305" key="2"/>
<comment type="subcellular location">
    <subcellularLocation>
        <location evidence="2">Cell inner membrane</location>
        <topology evidence="2">Multi-pass membrane protein</topology>
    </subcellularLocation>
</comment>
<comment type="similarity">
    <text evidence="2">Belongs to the TrbL/VirB6 family.</text>
</comment>
<feature type="chain" id="PRO_0000290182" description="Type IV secretion system protein VirB6">
    <location>
        <begin position="1"/>
        <end position="347"/>
    </location>
</feature>
<feature type="transmembrane region" description="Helical" evidence="1">
    <location>
        <begin position="32"/>
        <end position="52"/>
    </location>
</feature>
<feature type="transmembrane region" description="Helical" evidence="1">
    <location>
        <begin position="61"/>
        <end position="81"/>
    </location>
</feature>
<feature type="transmembrane region" description="Helical" evidence="1">
    <location>
        <begin position="153"/>
        <end position="173"/>
    </location>
</feature>
<feature type="transmembrane region" description="Helical" evidence="1">
    <location>
        <begin position="177"/>
        <end position="197"/>
    </location>
</feature>
<feature type="transmembrane region" description="Helical" evidence="1">
    <location>
        <begin position="205"/>
        <end position="225"/>
    </location>
</feature>
<feature type="transmembrane region" description="Helical" evidence="1">
    <location>
        <begin position="245"/>
        <end position="265"/>
    </location>
</feature>
<feature type="transmembrane region" description="Helical" evidence="1">
    <location>
        <begin position="270"/>
        <end position="290"/>
    </location>
</feature>
<gene>
    <name type="primary">virB6</name>
    <name type="ordered locus">BMEII0030</name>
</gene>
<accession>Q8YDZ2</accession>
<protein>
    <recommendedName>
        <fullName>Type IV secretion system protein VirB6</fullName>
    </recommendedName>
</protein>
<name>VIRB6_BRUME</name>
<keyword id="KW-0997">Cell inner membrane</keyword>
<keyword id="KW-1003">Cell membrane</keyword>
<keyword id="KW-0472">Membrane</keyword>
<keyword id="KW-0812">Transmembrane</keyword>
<keyword id="KW-1133">Transmembrane helix</keyword>
<keyword id="KW-0843">Virulence</keyword>
<proteinExistence type="inferred from homology"/>
<sequence>MVNPVIFEFIGTSIHNQLNNYVTMVASNTMNMIATTAVLAGGLYYTAMGILMSVGRIEGPFSQLVISCIKFMLIAAFALNISTYSEWVIDTVHNMESGFADAFAGNHGTPSSTIYQTLDNSLGKGWNIAAMLFEKGDNRGLTQIVQGFSELLLSFLVAGSTLILAGPTGAMIVATNAVIAILLGIGPLFILALGWAPTRGFFDRWFGTIVTSILQVALLSAVLSISSAIFSRMVAAINLASATQSTLFSCLSLTAVTIVMPYMMYKVYEYGGILGSSISAATISLGSLAVNTAKSGGGAMTSIFSGSSGGGGSGSAKAGGESSYSAGGNAMWSPAFRQHVLGQFNRD</sequence>
<dbReference type="EMBL" id="AE008918">
    <property type="protein sequence ID" value="AAL53271.1"/>
    <property type="molecule type" value="Genomic_DNA"/>
</dbReference>
<dbReference type="PIR" id="AD3513">
    <property type="entry name" value="AD3513"/>
</dbReference>
<dbReference type="RefSeq" id="WP_004686828.1">
    <property type="nucleotide sequence ID" value="NC_003318.1"/>
</dbReference>
<dbReference type="SMR" id="Q8YDZ2"/>
<dbReference type="GeneID" id="29596002"/>
<dbReference type="KEGG" id="bme:BMEII0030"/>
<dbReference type="KEGG" id="bmel:DK63_2089"/>
<dbReference type="PATRIC" id="fig|224914.52.peg.2190"/>
<dbReference type="eggNOG" id="COG3704">
    <property type="taxonomic scope" value="Bacteria"/>
</dbReference>
<dbReference type="PhylomeDB" id="Q8YDZ2"/>
<dbReference type="Proteomes" id="UP000000419">
    <property type="component" value="Chromosome II"/>
</dbReference>
<dbReference type="GO" id="GO:0005886">
    <property type="term" value="C:plasma membrane"/>
    <property type="evidence" value="ECO:0007669"/>
    <property type="project" value="UniProtKB-SubCell"/>
</dbReference>
<dbReference type="GO" id="GO:0030255">
    <property type="term" value="P:protein secretion by the type IV secretion system"/>
    <property type="evidence" value="ECO:0007669"/>
    <property type="project" value="InterPro"/>
</dbReference>
<dbReference type="InterPro" id="IPR007688">
    <property type="entry name" value="Conjugal_tfr_TrbL/VirB6"/>
</dbReference>
<dbReference type="Pfam" id="PF04610">
    <property type="entry name" value="TrbL"/>
    <property type="match status" value="1"/>
</dbReference>
<organism>
    <name type="scientific">Brucella melitensis biotype 1 (strain ATCC 23456 / CCUG 17765 / NCTC 10094 / 16M)</name>
    <dbReference type="NCBI Taxonomy" id="224914"/>
    <lineage>
        <taxon>Bacteria</taxon>
        <taxon>Pseudomonadati</taxon>
        <taxon>Pseudomonadota</taxon>
        <taxon>Alphaproteobacteria</taxon>
        <taxon>Hyphomicrobiales</taxon>
        <taxon>Brucellaceae</taxon>
        <taxon>Brucella/Ochrobactrum group</taxon>
        <taxon>Brucella</taxon>
    </lineage>
</organism>